<sequence length="119" mass="13473">MEIWINPACSKCRSAVQLLDAEGADYTVRRYLEDVPSEDEIRQVLDRLGLEPWDITRTQEAEAKELGVKEWARDASARDQWIKALAEHPKLIQRPIITADDGTAVVGRTDEAVRDALSR</sequence>
<protein>
    <recommendedName>
        <fullName>Uncharacterized protein in glnII region</fullName>
    </recommendedName>
    <alternativeName>
        <fullName>ORF1</fullName>
    </alternativeName>
</protein>
<feature type="chain" id="PRO_0000162587" description="Uncharacterized protein in glnII region">
    <location>
        <begin position="1"/>
        <end position="119"/>
    </location>
</feature>
<feature type="disulfide bond" description="Redox-active" evidence="1">
    <location>
        <begin position="9"/>
        <end position="12"/>
    </location>
</feature>
<evidence type="ECO:0000255" key="1">
    <source>
        <dbReference type="PROSITE-ProRule" id="PRU01282"/>
    </source>
</evidence>
<evidence type="ECO:0000305" key="2"/>
<dbReference type="EMBL" id="X52842">
    <property type="protein sequence ID" value="CAA37026.1"/>
    <property type="molecule type" value="Genomic_DNA"/>
</dbReference>
<dbReference type="PIR" id="A36724">
    <property type="entry name" value="A36724"/>
</dbReference>
<dbReference type="SMR" id="P19434"/>
<dbReference type="GO" id="GO:0008794">
    <property type="term" value="F:arsenate reductase (glutaredoxin) activity"/>
    <property type="evidence" value="ECO:0007669"/>
    <property type="project" value="InterPro"/>
</dbReference>
<dbReference type="CDD" id="cd03034">
    <property type="entry name" value="ArsC_ArsC"/>
    <property type="match status" value="1"/>
</dbReference>
<dbReference type="Gene3D" id="3.40.30.10">
    <property type="entry name" value="Glutaredoxin"/>
    <property type="match status" value="1"/>
</dbReference>
<dbReference type="InterPro" id="IPR006659">
    <property type="entry name" value="Arsenate_reductase"/>
</dbReference>
<dbReference type="InterPro" id="IPR006660">
    <property type="entry name" value="Arsenate_reductase-like"/>
</dbReference>
<dbReference type="InterPro" id="IPR036249">
    <property type="entry name" value="Thioredoxin-like_sf"/>
</dbReference>
<dbReference type="PANTHER" id="PTHR30041">
    <property type="entry name" value="ARSENATE REDUCTASE"/>
    <property type="match status" value="1"/>
</dbReference>
<dbReference type="PANTHER" id="PTHR30041:SF4">
    <property type="entry name" value="ARSENATE REDUCTASE"/>
    <property type="match status" value="1"/>
</dbReference>
<dbReference type="Pfam" id="PF03960">
    <property type="entry name" value="ArsC"/>
    <property type="match status" value="1"/>
</dbReference>
<dbReference type="SUPFAM" id="SSF52833">
    <property type="entry name" value="Thioredoxin-like"/>
    <property type="match status" value="1"/>
</dbReference>
<dbReference type="PROSITE" id="PS51353">
    <property type="entry name" value="ARSC"/>
    <property type="match status" value="1"/>
</dbReference>
<proteinExistence type="inferred from homology"/>
<name>YGL1_STRVR</name>
<comment type="similarity">
    <text evidence="2">Belongs to the ArsC family.</text>
</comment>
<accession>P19434</accession>
<reference key="1">
    <citation type="journal article" date="1990" name="J. Bacteriol.">
        <title>Overexpression of a Streptomyces viridochromogenes gene (glnII) encoding a glutamine synthetase similar to those of eucaryotes confers resistance against the antibiotic phosphinothricyl-alanyl-alanine.</title>
        <authorList>
            <person name="Behrmann I."/>
            <person name="Hillemann D."/>
            <person name="Puehler A."/>
            <person name="Strauch E."/>
            <person name="Wohlleben W."/>
        </authorList>
    </citation>
    <scope>NUCLEOTIDE SEQUENCE [GENOMIC DNA]</scope>
    <source>
        <strain>ES2</strain>
    </source>
</reference>
<organism>
    <name type="scientific">Streptomyces viridochromogenes</name>
    <dbReference type="NCBI Taxonomy" id="1938"/>
    <lineage>
        <taxon>Bacteria</taxon>
        <taxon>Bacillati</taxon>
        <taxon>Actinomycetota</taxon>
        <taxon>Actinomycetes</taxon>
        <taxon>Kitasatosporales</taxon>
        <taxon>Streptomycetaceae</taxon>
        <taxon>Streptomyces</taxon>
    </lineage>
</organism>
<keyword id="KW-1015">Disulfide bond</keyword>
<keyword id="KW-0560">Oxidoreductase</keyword>
<keyword id="KW-0676">Redox-active center</keyword>